<comment type="function">
    <text evidence="1">Involved in the binding of tRNA to the ribosomes.</text>
</comment>
<comment type="subunit">
    <text evidence="1">Part of the 30S ribosomal subunit.</text>
</comment>
<comment type="similarity">
    <text evidence="1">Belongs to the universal ribosomal protein uS10 family.</text>
</comment>
<feature type="chain" id="PRO_1000196297" description="Small ribosomal subunit protein uS10">
    <location>
        <begin position="1"/>
        <end position="102"/>
    </location>
</feature>
<protein>
    <recommendedName>
        <fullName evidence="1">Small ribosomal subunit protein uS10</fullName>
    </recommendedName>
    <alternativeName>
        <fullName evidence="2">30S ribosomal protein S10</fullName>
    </alternativeName>
</protein>
<gene>
    <name evidence="1" type="primary">rpsJ</name>
    <name type="ordered locus">Cagg_3025</name>
</gene>
<evidence type="ECO:0000255" key="1">
    <source>
        <dbReference type="HAMAP-Rule" id="MF_00508"/>
    </source>
</evidence>
<evidence type="ECO:0000305" key="2"/>
<reference key="1">
    <citation type="submission" date="2008-12" db="EMBL/GenBank/DDBJ databases">
        <title>Complete sequence of Chloroflexus aggregans DSM 9485.</title>
        <authorList>
            <consortium name="US DOE Joint Genome Institute"/>
            <person name="Lucas S."/>
            <person name="Copeland A."/>
            <person name="Lapidus A."/>
            <person name="Glavina del Rio T."/>
            <person name="Dalin E."/>
            <person name="Tice H."/>
            <person name="Pitluck S."/>
            <person name="Foster B."/>
            <person name="Larimer F."/>
            <person name="Land M."/>
            <person name="Hauser L."/>
            <person name="Kyrpides N."/>
            <person name="Mikhailova N."/>
            <person name="Bryant D.A."/>
            <person name="Richardson P."/>
        </authorList>
    </citation>
    <scope>NUCLEOTIDE SEQUENCE [LARGE SCALE GENOMIC DNA]</scope>
    <source>
        <strain>MD-66 / DSM 9485</strain>
    </source>
</reference>
<sequence length="102" mass="11547">MAKQKVRIRLKAYDHKILDQSARQIVEAAERTGALVAGPVPLPTKIERYSVIRSGFIDKDSQEQFEIRTHKRLIDVLDPSQQTINALMKLNLPAGVDIEIKL</sequence>
<organism>
    <name type="scientific">Chloroflexus aggregans (strain MD-66 / DSM 9485)</name>
    <dbReference type="NCBI Taxonomy" id="326427"/>
    <lineage>
        <taxon>Bacteria</taxon>
        <taxon>Bacillati</taxon>
        <taxon>Chloroflexota</taxon>
        <taxon>Chloroflexia</taxon>
        <taxon>Chloroflexales</taxon>
        <taxon>Chloroflexineae</taxon>
        <taxon>Chloroflexaceae</taxon>
        <taxon>Chloroflexus</taxon>
    </lineage>
</organism>
<proteinExistence type="inferred from homology"/>
<dbReference type="EMBL" id="CP001337">
    <property type="protein sequence ID" value="ACL25885.1"/>
    <property type="molecule type" value="Genomic_DNA"/>
</dbReference>
<dbReference type="RefSeq" id="WP_012258230.1">
    <property type="nucleotide sequence ID" value="NC_011831.1"/>
</dbReference>
<dbReference type="SMR" id="B8G6S6"/>
<dbReference type="STRING" id="326427.Cagg_3025"/>
<dbReference type="KEGG" id="cag:Cagg_3025"/>
<dbReference type="eggNOG" id="COG0051">
    <property type="taxonomic scope" value="Bacteria"/>
</dbReference>
<dbReference type="HOGENOM" id="CLU_122625_1_3_0"/>
<dbReference type="OrthoDB" id="9804464at2"/>
<dbReference type="Proteomes" id="UP000002508">
    <property type="component" value="Chromosome"/>
</dbReference>
<dbReference type="GO" id="GO:1990904">
    <property type="term" value="C:ribonucleoprotein complex"/>
    <property type="evidence" value="ECO:0007669"/>
    <property type="project" value="UniProtKB-KW"/>
</dbReference>
<dbReference type="GO" id="GO:0005840">
    <property type="term" value="C:ribosome"/>
    <property type="evidence" value="ECO:0007669"/>
    <property type="project" value="UniProtKB-KW"/>
</dbReference>
<dbReference type="GO" id="GO:0003735">
    <property type="term" value="F:structural constituent of ribosome"/>
    <property type="evidence" value="ECO:0007669"/>
    <property type="project" value="InterPro"/>
</dbReference>
<dbReference type="GO" id="GO:0000049">
    <property type="term" value="F:tRNA binding"/>
    <property type="evidence" value="ECO:0007669"/>
    <property type="project" value="UniProtKB-UniRule"/>
</dbReference>
<dbReference type="GO" id="GO:0006412">
    <property type="term" value="P:translation"/>
    <property type="evidence" value="ECO:0007669"/>
    <property type="project" value="UniProtKB-UniRule"/>
</dbReference>
<dbReference type="FunFam" id="3.30.70.600:FF:000001">
    <property type="entry name" value="30S ribosomal protein S10"/>
    <property type="match status" value="1"/>
</dbReference>
<dbReference type="Gene3D" id="3.30.70.600">
    <property type="entry name" value="Ribosomal protein S10 domain"/>
    <property type="match status" value="1"/>
</dbReference>
<dbReference type="HAMAP" id="MF_00508">
    <property type="entry name" value="Ribosomal_uS10"/>
    <property type="match status" value="1"/>
</dbReference>
<dbReference type="InterPro" id="IPR001848">
    <property type="entry name" value="Ribosomal_uS10"/>
</dbReference>
<dbReference type="InterPro" id="IPR018268">
    <property type="entry name" value="Ribosomal_uS10_CS"/>
</dbReference>
<dbReference type="InterPro" id="IPR027486">
    <property type="entry name" value="Ribosomal_uS10_dom"/>
</dbReference>
<dbReference type="InterPro" id="IPR036838">
    <property type="entry name" value="Ribosomal_uS10_dom_sf"/>
</dbReference>
<dbReference type="NCBIfam" id="NF001861">
    <property type="entry name" value="PRK00596.1"/>
    <property type="match status" value="1"/>
</dbReference>
<dbReference type="NCBIfam" id="TIGR01049">
    <property type="entry name" value="rpsJ_bact"/>
    <property type="match status" value="1"/>
</dbReference>
<dbReference type="PANTHER" id="PTHR11700">
    <property type="entry name" value="30S RIBOSOMAL PROTEIN S10 FAMILY MEMBER"/>
    <property type="match status" value="1"/>
</dbReference>
<dbReference type="Pfam" id="PF00338">
    <property type="entry name" value="Ribosomal_S10"/>
    <property type="match status" value="1"/>
</dbReference>
<dbReference type="PRINTS" id="PR00971">
    <property type="entry name" value="RIBOSOMALS10"/>
</dbReference>
<dbReference type="SMART" id="SM01403">
    <property type="entry name" value="Ribosomal_S10"/>
    <property type="match status" value="1"/>
</dbReference>
<dbReference type="SUPFAM" id="SSF54999">
    <property type="entry name" value="Ribosomal protein S10"/>
    <property type="match status" value="1"/>
</dbReference>
<dbReference type="PROSITE" id="PS00361">
    <property type="entry name" value="RIBOSOMAL_S10"/>
    <property type="match status" value="1"/>
</dbReference>
<keyword id="KW-0687">Ribonucleoprotein</keyword>
<keyword id="KW-0689">Ribosomal protein</keyword>
<name>RS10_CHLAD</name>
<accession>B8G6S6</accession>